<gene>
    <name evidence="1" type="primary">rplN</name>
    <name type="ordered locus">BF4171</name>
</gene>
<feature type="chain" id="PRO_1000055515" description="Large ribosomal subunit protein uL14">
    <location>
        <begin position="1"/>
        <end position="121"/>
    </location>
</feature>
<accession>Q64NL8</accession>
<reference key="1">
    <citation type="journal article" date="2004" name="Proc. Natl. Acad. Sci. U.S.A.">
        <title>Genomic analysis of Bacteroides fragilis reveals extensive DNA inversions regulating cell surface adaptation.</title>
        <authorList>
            <person name="Kuwahara T."/>
            <person name="Yamashita A."/>
            <person name="Hirakawa H."/>
            <person name="Nakayama H."/>
            <person name="Toh H."/>
            <person name="Okada N."/>
            <person name="Kuhara S."/>
            <person name="Hattori M."/>
            <person name="Hayashi T."/>
            <person name="Ohnishi Y."/>
        </authorList>
    </citation>
    <scope>NUCLEOTIDE SEQUENCE [LARGE SCALE GENOMIC DNA]</scope>
    <source>
        <strain>YCH46</strain>
    </source>
</reference>
<sequence>MIQVESRLTVCDNSGAKEALCIRVLGGTGRRYASVGDVIVVSVKSVIPSSDVKKGAVSKALIVRTKKEIRRPDGSYIRFDDNACVLLNNAGEIRGSRIFGPVARELRATNMKVVSLAPEVL</sequence>
<organism>
    <name type="scientific">Bacteroides fragilis (strain YCH46)</name>
    <dbReference type="NCBI Taxonomy" id="295405"/>
    <lineage>
        <taxon>Bacteria</taxon>
        <taxon>Pseudomonadati</taxon>
        <taxon>Bacteroidota</taxon>
        <taxon>Bacteroidia</taxon>
        <taxon>Bacteroidales</taxon>
        <taxon>Bacteroidaceae</taxon>
        <taxon>Bacteroides</taxon>
    </lineage>
</organism>
<protein>
    <recommendedName>
        <fullName evidence="1">Large ribosomal subunit protein uL14</fullName>
    </recommendedName>
    <alternativeName>
        <fullName evidence="2">50S ribosomal protein L14</fullName>
    </alternativeName>
</protein>
<dbReference type="EMBL" id="AP006841">
    <property type="protein sequence ID" value="BAD50914.1"/>
    <property type="molecule type" value="Genomic_DNA"/>
</dbReference>
<dbReference type="RefSeq" id="WP_004296340.1">
    <property type="nucleotide sequence ID" value="NZ_UYXF01000007.1"/>
</dbReference>
<dbReference type="RefSeq" id="YP_101448.1">
    <property type="nucleotide sequence ID" value="NC_006347.1"/>
</dbReference>
<dbReference type="SMR" id="Q64NL8"/>
<dbReference type="STRING" id="295405.BF4171"/>
<dbReference type="GeneID" id="93105314"/>
<dbReference type="KEGG" id="bfr:BF4171"/>
<dbReference type="PATRIC" id="fig|295405.11.peg.4025"/>
<dbReference type="HOGENOM" id="CLU_095071_2_1_10"/>
<dbReference type="OrthoDB" id="9806379at2"/>
<dbReference type="Proteomes" id="UP000002197">
    <property type="component" value="Chromosome"/>
</dbReference>
<dbReference type="GO" id="GO:0022625">
    <property type="term" value="C:cytosolic large ribosomal subunit"/>
    <property type="evidence" value="ECO:0007669"/>
    <property type="project" value="TreeGrafter"/>
</dbReference>
<dbReference type="GO" id="GO:0070180">
    <property type="term" value="F:large ribosomal subunit rRNA binding"/>
    <property type="evidence" value="ECO:0007669"/>
    <property type="project" value="TreeGrafter"/>
</dbReference>
<dbReference type="GO" id="GO:0003735">
    <property type="term" value="F:structural constituent of ribosome"/>
    <property type="evidence" value="ECO:0007669"/>
    <property type="project" value="InterPro"/>
</dbReference>
<dbReference type="GO" id="GO:0006412">
    <property type="term" value="P:translation"/>
    <property type="evidence" value="ECO:0007669"/>
    <property type="project" value="UniProtKB-UniRule"/>
</dbReference>
<dbReference type="CDD" id="cd00337">
    <property type="entry name" value="Ribosomal_uL14"/>
    <property type="match status" value="1"/>
</dbReference>
<dbReference type="FunFam" id="2.40.150.20:FF:000001">
    <property type="entry name" value="50S ribosomal protein L14"/>
    <property type="match status" value="1"/>
</dbReference>
<dbReference type="Gene3D" id="2.40.150.20">
    <property type="entry name" value="Ribosomal protein L14"/>
    <property type="match status" value="1"/>
</dbReference>
<dbReference type="HAMAP" id="MF_01367">
    <property type="entry name" value="Ribosomal_uL14"/>
    <property type="match status" value="1"/>
</dbReference>
<dbReference type="InterPro" id="IPR000218">
    <property type="entry name" value="Ribosomal_uL14"/>
</dbReference>
<dbReference type="InterPro" id="IPR005745">
    <property type="entry name" value="Ribosomal_uL14_bac-type"/>
</dbReference>
<dbReference type="InterPro" id="IPR019972">
    <property type="entry name" value="Ribosomal_uL14_CS"/>
</dbReference>
<dbReference type="InterPro" id="IPR036853">
    <property type="entry name" value="Ribosomal_uL14_sf"/>
</dbReference>
<dbReference type="NCBIfam" id="TIGR01067">
    <property type="entry name" value="rplN_bact"/>
    <property type="match status" value="1"/>
</dbReference>
<dbReference type="PANTHER" id="PTHR11761">
    <property type="entry name" value="50S/60S RIBOSOMAL PROTEIN L14/L23"/>
    <property type="match status" value="1"/>
</dbReference>
<dbReference type="PANTHER" id="PTHR11761:SF3">
    <property type="entry name" value="LARGE RIBOSOMAL SUBUNIT PROTEIN UL14M"/>
    <property type="match status" value="1"/>
</dbReference>
<dbReference type="Pfam" id="PF00238">
    <property type="entry name" value="Ribosomal_L14"/>
    <property type="match status" value="1"/>
</dbReference>
<dbReference type="SMART" id="SM01374">
    <property type="entry name" value="Ribosomal_L14"/>
    <property type="match status" value="1"/>
</dbReference>
<dbReference type="SUPFAM" id="SSF50193">
    <property type="entry name" value="Ribosomal protein L14"/>
    <property type="match status" value="1"/>
</dbReference>
<dbReference type="PROSITE" id="PS00049">
    <property type="entry name" value="RIBOSOMAL_L14"/>
    <property type="match status" value="1"/>
</dbReference>
<evidence type="ECO:0000255" key="1">
    <source>
        <dbReference type="HAMAP-Rule" id="MF_01367"/>
    </source>
</evidence>
<evidence type="ECO:0000305" key="2"/>
<keyword id="KW-0687">Ribonucleoprotein</keyword>
<keyword id="KW-0689">Ribosomal protein</keyword>
<keyword id="KW-0694">RNA-binding</keyword>
<keyword id="KW-0699">rRNA-binding</keyword>
<name>RL14_BACFR</name>
<comment type="function">
    <text evidence="1">Binds to 23S rRNA. Forms part of two intersubunit bridges in the 70S ribosome.</text>
</comment>
<comment type="subunit">
    <text evidence="1">Part of the 50S ribosomal subunit. Forms a cluster with proteins L3 and L19. In the 70S ribosome, L14 and L19 interact and together make contacts with the 16S rRNA in bridges B5 and B8.</text>
</comment>
<comment type="similarity">
    <text evidence="1">Belongs to the universal ribosomal protein uL14 family.</text>
</comment>
<proteinExistence type="inferred from homology"/>